<gene>
    <name evidence="1" type="primary">secB</name>
    <name type="ordered locus">BPEN_627</name>
</gene>
<accession>Q491X9</accession>
<sequence>MFFVLESNSNNVLFRIQRIYIKDISFEAPNTPGVFQINWNPKIKVDLNSDAKNIHIDMYEVVLCVTVTAKIEDDTAFLCQVKQAGIFNVSGLNKTQMIRCLKVHCPTILFPYASECVSNQVSRGTFPQLNLDPINFDILFIQSLQKKYNDTLKI</sequence>
<evidence type="ECO:0000255" key="1">
    <source>
        <dbReference type="HAMAP-Rule" id="MF_00821"/>
    </source>
</evidence>
<proteinExistence type="inferred from homology"/>
<protein>
    <recommendedName>
        <fullName evidence="1">Protein-export protein SecB</fullName>
    </recommendedName>
</protein>
<comment type="function">
    <text evidence="1">One of the proteins required for the normal export of preproteins out of the cell cytoplasm. It is a molecular chaperone that binds to a subset of precursor proteins, maintaining them in a translocation-competent state. It also specifically binds to its receptor SecA.</text>
</comment>
<comment type="subunit">
    <text evidence="1">Homotetramer, a dimer of dimers. One homotetramer interacts with 1 SecA dimer.</text>
</comment>
<comment type="subcellular location">
    <subcellularLocation>
        <location evidence="1">Cytoplasm</location>
    </subcellularLocation>
</comment>
<comment type="similarity">
    <text evidence="1">Belongs to the SecB family.</text>
</comment>
<dbReference type="EMBL" id="CP000016">
    <property type="protein sequence ID" value="AAZ41225.1"/>
    <property type="molecule type" value="Genomic_DNA"/>
</dbReference>
<dbReference type="SMR" id="Q491X9"/>
<dbReference type="STRING" id="291272.BPEN_627"/>
<dbReference type="KEGG" id="bpn:BPEN_627"/>
<dbReference type="eggNOG" id="COG1952">
    <property type="taxonomic scope" value="Bacteria"/>
</dbReference>
<dbReference type="HOGENOM" id="CLU_111574_1_0_6"/>
<dbReference type="OrthoDB" id="9795145at2"/>
<dbReference type="Proteomes" id="UP000007794">
    <property type="component" value="Chromosome"/>
</dbReference>
<dbReference type="GO" id="GO:0005737">
    <property type="term" value="C:cytoplasm"/>
    <property type="evidence" value="ECO:0007669"/>
    <property type="project" value="UniProtKB-SubCell"/>
</dbReference>
<dbReference type="GO" id="GO:0051082">
    <property type="term" value="F:unfolded protein binding"/>
    <property type="evidence" value="ECO:0007669"/>
    <property type="project" value="InterPro"/>
</dbReference>
<dbReference type="GO" id="GO:0006457">
    <property type="term" value="P:protein folding"/>
    <property type="evidence" value="ECO:0007669"/>
    <property type="project" value="UniProtKB-UniRule"/>
</dbReference>
<dbReference type="GO" id="GO:0051262">
    <property type="term" value="P:protein tetramerization"/>
    <property type="evidence" value="ECO:0007669"/>
    <property type="project" value="InterPro"/>
</dbReference>
<dbReference type="GO" id="GO:0015031">
    <property type="term" value="P:protein transport"/>
    <property type="evidence" value="ECO:0007669"/>
    <property type="project" value="UniProtKB-UniRule"/>
</dbReference>
<dbReference type="Gene3D" id="3.10.420.10">
    <property type="entry name" value="SecB-like"/>
    <property type="match status" value="1"/>
</dbReference>
<dbReference type="HAMAP" id="MF_00821">
    <property type="entry name" value="SecB"/>
    <property type="match status" value="1"/>
</dbReference>
<dbReference type="InterPro" id="IPR003708">
    <property type="entry name" value="SecB"/>
</dbReference>
<dbReference type="InterPro" id="IPR035958">
    <property type="entry name" value="SecB-like_sf"/>
</dbReference>
<dbReference type="NCBIfam" id="NF004393">
    <property type="entry name" value="PRK05751.1-4"/>
    <property type="match status" value="1"/>
</dbReference>
<dbReference type="NCBIfam" id="TIGR00809">
    <property type="entry name" value="secB"/>
    <property type="match status" value="1"/>
</dbReference>
<dbReference type="PANTHER" id="PTHR36918">
    <property type="match status" value="1"/>
</dbReference>
<dbReference type="PANTHER" id="PTHR36918:SF1">
    <property type="entry name" value="PROTEIN-EXPORT PROTEIN SECB"/>
    <property type="match status" value="1"/>
</dbReference>
<dbReference type="Pfam" id="PF02556">
    <property type="entry name" value="SecB"/>
    <property type="match status" value="1"/>
</dbReference>
<dbReference type="PRINTS" id="PR01594">
    <property type="entry name" value="SECBCHAPRONE"/>
</dbReference>
<dbReference type="SUPFAM" id="SSF54611">
    <property type="entry name" value="SecB-like"/>
    <property type="match status" value="1"/>
</dbReference>
<reference key="1">
    <citation type="journal article" date="2005" name="Genome Res.">
        <title>Genome sequence of Blochmannia pennsylvanicus indicates parallel evolutionary trends among bacterial mutualists of insects.</title>
        <authorList>
            <person name="Degnan P.H."/>
            <person name="Lazarus A.B."/>
            <person name="Wernegreen J.J."/>
        </authorList>
    </citation>
    <scope>NUCLEOTIDE SEQUENCE [LARGE SCALE GENOMIC DNA]</scope>
    <source>
        <strain>BPEN</strain>
    </source>
</reference>
<organism>
    <name type="scientific">Blochmanniella pennsylvanica (strain BPEN)</name>
    <dbReference type="NCBI Taxonomy" id="291272"/>
    <lineage>
        <taxon>Bacteria</taxon>
        <taxon>Pseudomonadati</taxon>
        <taxon>Pseudomonadota</taxon>
        <taxon>Gammaproteobacteria</taxon>
        <taxon>Enterobacterales</taxon>
        <taxon>Enterobacteriaceae</taxon>
        <taxon>ant endosymbionts</taxon>
        <taxon>Candidatus Blochmanniella</taxon>
    </lineage>
</organism>
<feature type="chain" id="PRO_0000055347" description="Protein-export protein SecB">
    <location>
        <begin position="1"/>
        <end position="154"/>
    </location>
</feature>
<name>SECB_BLOPB</name>
<keyword id="KW-0143">Chaperone</keyword>
<keyword id="KW-0963">Cytoplasm</keyword>
<keyword id="KW-0653">Protein transport</keyword>
<keyword id="KW-1185">Reference proteome</keyword>
<keyword id="KW-0811">Translocation</keyword>
<keyword id="KW-0813">Transport</keyword>